<gene>
    <name type="primary">HHT1</name>
    <name type="ORF">UMAG_03916</name>
</gene>
<keyword id="KW-0007">Acetylation</keyword>
<keyword id="KW-0158">Chromosome</keyword>
<keyword id="KW-0238">DNA-binding</keyword>
<keyword id="KW-0488">Methylation</keyword>
<keyword id="KW-0544">Nucleosome core</keyword>
<keyword id="KW-0539">Nucleus</keyword>
<keyword id="KW-0597">Phosphoprotein</keyword>
<keyword id="KW-1185">Reference proteome</keyword>
<reference key="1">
    <citation type="journal article" date="2006" name="Nature">
        <title>Insights from the genome of the biotrophic fungal plant pathogen Ustilago maydis.</title>
        <authorList>
            <person name="Kaemper J."/>
            <person name="Kahmann R."/>
            <person name="Boelker M."/>
            <person name="Ma L.-J."/>
            <person name="Brefort T."/>
            <person name="Saville B.J."/>
            <person name="Banuett F."/>
            <person name="Kronstad J.W."/>
            <person name="Gold S.E."/>
            <person name="Mueller O."/>
            <person name="Perlin M.H."/>
            <person name="Woesten H.A.B."/>
            <person name="de Vries R."/>
            <person name="Ruiz-Herrera J."/>
            <person name="Reynaga-Pena C.G."/>
            <person name="Snetselaar K."/>
            <person name="McCann M."/>
            <person name="Perez-Martin J."/>
            <person name="Feldbruegge M."/>
            <person name="Basse C.W."/>
            <person name="Steinberg G."/>
            <person name="Ibeas J.I."/>
            <person name="Holloman W."/>
            <person name="Guzman P."/>
            <person name="Farman M.L."/>
            <person name="Stajich J.E."/>
            <person name="Sentandreu R."/>
            <person name="Gonzalez-Prieto J.M."/>
            <person name="Kennell J.C."/>
            <person name="Molina L."/>
            <person name="Schirawski J."/>
            <person name="Mendoza-Mendoza A."/>
            <person name="Greilinger D."/>
            <person name="Muench K."/>
            <person name="Roessel N."/>
            <person name="Scherer M."/>
            <person name="Vranes M."/>
            <person name="Ladendorf O."/>
            <person name="Vincon V."/>
            <person name="Fuchs U."/>
            <person name="Sandrock B."/>
            <person name="Meng S."/>
            <person name="Ho E.C.H."/>
            <person name="Cahill M.J."/>
            <person name="Boyce K.J."/>
            <person name="Klose J."/>
            <person name="Klosterman S.J."/>
            <person name="Deelstra H.J."/>
            <person name="Ortiz-Castellanos L."/>
            <person name="Li W."/>
            <person name="Sanchez-Alonso P."/>
            <person name="Schreier P.H."/>
            <person name="Haeuser-Hahn I."/>
            <person name="Vaupel M."/>
            <person name="Koopmann E."/>
            <person name="Friedrich G."/>
            <person name="Voss H."/>
            <person name="Schlueter T."/>
            <person name="Margolis J."/>
            <person name="Platt D."/>
            <person name="Swimmer C."/>
            <person name="Gnirke A."/>
            <person name="Chen F."/>
            <person name="Vysotskaia V."/>
            <person name="Mannhaupt G."/>
            <person name="Gueldener U."/>
            <person name="Muensterkoetter M."/>
            <person name="Haase D."/>
            <person name="Oesterheld M."/>
            <person name="Mewes H.-W."/>
            <person name="Mauceli E.W."/>
            <person name="DeCaprio D."/>
            <person name="Wade C.M."/>
            <person name="Butler J."/>
            <person name="Young S.K."/>
            <person name="Jaffe D.B."/>
            <person name="Calvo S.E."/>
            <person name="Nusbaum C."/>
            <person name="Galagan J.E."/>
            <person name="Birren B.W."/>
        </authorList>
    </citation>
    <scope>NUCLEOTIDE SEQUENCE [LARGE SCALE GENOMIC DNA]</scope>
    <source>
        <strain>DSM 14603 / FGSC 9021 / UM521</strain>
    </source>
</reference>
<reference key="2">
    <citation type="submission" date="2014-09" db="EMBL/GenBank/DDBJ databases">
        <authorList>
            <person name="Gueldener U."/>
            <person name="Muensterkoetter M."/>
            <person name="Walter M.C."/>
            <person name="Mannhaupt G."/>
            <person name="Kahmann R."/>
        </authorList>
    </citation>
    <scope>GENOME REANNOTATION</scope>
    <source>
        <strain>DSM 14603 / FGSC 9021 / UM521</strain>
    </source>
</reference>
<feature type="initiator methionine" description="Removed" evidence="1">
    <location>
        <position position="1"/>
    </location>
</feature>
<feature type="chain" id="PRO_0000270593" description="Histone H3.1">
    <location>
        <begin position="2"/>
        <end position="136"/>
    </location>
</feature>
<feature type="region of interest" description="Disordered" evidence="2">
    <location>
        <begin position="1"/>
        <end position="41"/>
    </location>
</feature>
<feature type="compositionally biased region" description="Low complexity" evidence="2">
    <location>
        <begin position="22"/>
        <end position="33"/>
    </location>
</feature>
<feature type="modified residue" description="N6,N6,N6-trimethyllysine; alternate" evidence="1">
    <location>
        <position position="5"/>
    </location>
</feature>
<feature type="modified residue" description="N6,N6-dimethyllysine; alternate" evidence="1">
    <location>
        <position position="5"/>
    </location>
</feature>
<feature type="modified residue" description="N6-methyllysine; alternate" evidence="1">
    <location>
        <position position="5"/>
    </location>
</feature>
<feature type="modified residue" description="N6-acetyllysine; alternate" evidence="1">
    <location>
        <position position="10"/>
    </location>
</feature>
<feature type="modified residue" description="N6-methyllysine; alternate" evidence="1">
    <location>
        <position position="10"/>
    </location>
</feature>
<feature type="modified residue" description="Phosphoserine" evidence="1">
    <location>
        <position position="11"/>
    </location>
</feature>
<feature type="modified residue" description="N6,N6-dimethyllysine; alternate" evidence="1">
    <location>
        <position position="15"/>
    </location>
</feature>
<feature type="modified residue" description="N6-acetyllysine; alternate" evidence="1">
    <location>
        <position position="15"/>
    </location>
</feature>
<feature type="modified residue" description="N6-acetyllysine; alternate" evidence="1">
    <location>
        <position position="19"/>
    </location>
</feature>
<feature type="modified residue" description="N6-methyllysine; alternate" evidence="1">
    <location>
        <position position="19"/>
    </location>
</feature>
<feature type="modified residue" description="N6-acetyllysine; alternate" evidence="1">
    <location>
        <position position="24"/>
    </location>
</feature>
<feature type="modified residue" description="N6-methyllysine; alternate" evidence="1">
    <location>
        <position position="24"/>
    </location>
</feature>
<feature type="modified residue" description="N6,N6,N6-trimethyllysine; alternate" evidence="1">
    <location>
        <position position="28"/>
    </location>
</feature>
<feature type="modified residue" description="N6,N6-dimethyllysine; alternate" evidence="1">
    <location>
        <position position="28"/>
    </location>
</feature>
<feature type="modified residue" description="N6-acetyllysine; alternate" evidence="1">
    <location>
        <position position="28"/>
    </location>
</feature>
<feature type="modified residue" description="N6-methyllysine; alternate" evidence="1">
    <location>
        <position position="28"/>
    </location>
</feature>
<feature type="modified residue" description="N6,N6,N6-trimethyllysine; alternate" evidence="1">
    <location>
        <position position="37"/>
    </location>
</feature>
<feature type="modified residue" description="N6,N6-dimethyllysine; alternate" evidence="1">
    <location>
        <position position="37"/>
    </location>
</feature>
<feature type="modified residue" description="N6-acetyllysine; alternate" evidence="1">
    <location>
        <position position="37"/>
    </location>
</feature>
<feature type="modified residue" description="N6-methyllysine; alternate" evidence="1">
    <location>
        <position position="37"/>
    </location>
</feature>
<feature type="modified residue" description="N6-acetyllysine" evidence="1">
    <location>
        <position position="57"/>
    </location>
</feature>
<feature type="modified residue" description="N6-acetyllysine" evidence="1">
    <location>
        <position position="65"/>
    </location>
</feature>
<feature type="modified residue" description="N6,N6,N6-trimethyllysine; alternate" evidence="1">
    <location>
        <position position="80"/>
    </location>
</feature>
<feature type="modified residue" description="N6,N6-dimethyllysine; alternate" evidence="1">
    <location>
        <position position="80"/>
    </location>
</feature>
<feature type="modified residue" description="N6-methyllysine; alternate" evidence="1">
    <location>
        <position position="80"/>
    </location>
</feature>
<comment type="function">
    <text>Core component of nucleosome. Nucleosomes wrap and compact DNA into chromatin, limiting DNA accessibility to the cellular machineries which require DNA as a template. Histones thereby play a central role in transcription regulation, DNA repair, DNA replication and chromosomal stability. DNA accessibility is regulated via a complex set of post-translational modifications of histones, also called histone code, and nucleosome remodeling.</text>
</comment>
<comment type="subunit">
    <text>The nucleosome is a histone octamer containing two molecules each of H2A, H2B, H3 and H4 assembled in one H3-H4 heterotetramer and two H2A-H2B heterodimers. The octamer wraps approximately 147 bp of DNA.</text>
</comment>
<comment type="subcellular location">
    <subcellularLocation>
        <location evidence="1">Nucleus</location>
    </subcellularLocation>
    <subcellularLocation>
        <location evidence="1">Chromosome</location>
    </subcellularLocation>
</comment>
<comment type="PTM">
    <text evidence="1">Phosphorylated to form H3S10ph. H3S10ph promotes subsequent H3K14ac formation and is required for transcriptional activation through TBP recruitment to the promoters (By similarity).</text>
</comment>
<comment type="PTM">
    <text evidence="1">Mono-, di- and trimethylated by the COMPASS complex to form H3K4me1/2/3. H3K4me activates gene expression by regulating transcription elongation and plays a role in telomere length maintenance. H3K4me enrichment correlates with transcription levels, and occurs in a 5' to 3' gradient with H3K4me3 enrichment at the 5'-end of genes, shifting to H3K4me2 and then H3K4me1. Methylated by SET2 to form H3K36me. H3K36me represses gene expression. Methylated by DOT1 to form H3K79me. H3K79me is required for association of SIR proteins with telomeric regions and for telomeric silencing. The COMPASS-mediated formation of H3K4me2/3 and the DOT1-mediated formation of H3K79me require H2BK123ub1 (By similarity).</text>
</comment>
<comment type="PTM">
    <text evidence="1">Acetylation of histone H3 leads to transcriptional activation. H3K14ac formation by GCN5 is promoted by H3S10ph. H3K14ac can also be formed by ESA1. H3K56ac formation occurs predominantly in newly synthesized H3 molecules during G1, S and G2/M of the cell cycle and may be involved in DNA repair (By similarity).</text>
</comment>
<comment type="similarity">
    <text evidence="3">Belongs to the histone H3 family.</text>
</comment>
<comment type="caution">
    <text evidence="3">To ensure consistency between histone entries, we follow the 'Brno' nomenclature for histone modifications, with positions referring to those used in the literature for the 'closest' model organism. Due to slight variations in histone sequences between organisms and to the presence of initiator methionine in UniProtKB/Swiss-Prot sequences, the actual positions of modified amino acids in the sequence generally differ. In this entry the following conventions are used: H3K4me1/2/3 = mono-, di- and trimethylated Lys-5; H3K9ac = acetylated Lys-10; H3K9me1 = monomethylated Lys-10; H3S10ph = phosphorylated Ser-11; H3K14ac = acetylated Lys-15; H3K14me2 = dimethylated Lys-15; H3K18ac = acetylated Lys-19; H3K18me1 = monomethylated Lys-19; H3K23ac = acetylated Lys-24; H3K23me1 = monomethylated Lys-24; H3K27ac = acetylated Lys-28; H3K27me1/2/3 = mono-, di- and trimethylated Lys-28; H3K36ac = acetylated Lys-37; H3K36me1/2/3 = mono-, di- and trimethylated Lys-37; H3K56ac = acetylated Lys-57; H3K64ac = acetylated Lys-65; H3K79me1/2/3 = mono-, di- and trimethylated Lys-80.</text>
</comment>
<evidence type="ECO:0000250" key="1"/>
<evidence type="ECO:0000256" key="2">
    <source>
        <dbReference type="SAM" id="MobiDB-lite"/>
    </source>
</evidence>
<evidence type="ECO:0000305" key="3"/>
<proteinExistence type="inferred from homology"/>
<accession>Q4P7J7</accession>
<accession>A0A0D1DZ87</accession>
<organism>
    <name type="scientific">Mycosarcoma maydis</name>
    <name type="common">Corn smut fungus</name>
    <name type="synonym">Ustilago maydis</name>
    <dbReference type="NCBI Taxonomy" id="5270"/>
    <lineage>
        <taxon>Eukaryota</taxon>
        <taxon>Fungi</taxon>
        <taxon>Dikarya</taxon>
        <taxon>Basidiomycota</taxon>
        <taxon>Ustilaginomycotina</taxon>
        <taxon>Ustilaginomycetes</taxon>
        <taxon>Ustilaginales</taxon>
        <taxon>Ustilaginaceae</taxon>
        <taxon>Mycosarcoma</taxon>
    </lineage>
</organism>
<dbReference type="EMBL" id="CM003150">
    <property type="protein sequence ID" value="KIS67860.1"/>
    <property type="molecule type" value="Genomic_DNA"/>
</dbReference>
<dbReference type="RefSeq" id="XP_011390391.1">
    <property type="nucleotide sequence ID" value="XM_011392089.1"/>
</dbReference>
<dbReference type="SMR" id="Q4P7J7"/>
<dbReference type="FunCoup" id="Q4P7J7">
    <property type="interactions" value="439"/>
</dbReference>
<dbReference type="STRING" id="237631.Q4P7J7"/>
<dbReference type="EnsemblFungi" id="KIS67860">
    <property type="protein sequence ID" value="KIS67860"/>
    <property type="gene ID" value="UMAG_03916"/>
</dbReference>
<dbReference type="GeneID" id="23564239"/>
<dbReference type="KEGG" id="uma:UMAG_03916"/>
<dbReference type="VEuPathDB" id="FungiDB:UMAG_03916"/>
<dbReference type="eggNOG" id="KOG1745">
    <property type="taxonomic scope" value="Eukaryota"/>
</dbReference>
<dbReference type="HOGENOM" id="CLU_078295_4_0_1"/>
<dbReference type="InParanoid" id="Q4P7J7"/>
<dbReference type="OMA" id="DSNRCAI"/>
<dbReference type="OrthoDB" id="842664at2759"/>
<dbReference type="Proteomes" id="UP000000561">
    <property type="component" value="Chromosome 11"/>
</dbReference>
<dbReference type="GO" id="GO:0000786">
    <property type="term" value="C:nucleosome"/>
    <property type="evidence" value="ECO:0007669"/>
    <property type="project" value="UniProtKB-KW"/>
</dbReference>
<dbReference type="GO" id="GO:0005634">
    <property type="term" value="C:nucleus"/>
    <property type="evidence" value="ECO:0000318"/>
    <property type="project" value="GO_Central"/>
</dbReference>
<dbReference type="GO" id="GO:0003677">
    <property type="term" value="F:DNA binding"/>
    <property type="evidence" value="ECO:0007669"/>
    <property type="project" value="UniProtKB-KW"/>
</dbReference>
<dbReference type="GO" id="GO:0046982">
    <property type="term" value="F:protein heterodimerization activity"/>
    <property type="evidence" value="ECO:0007669"/>
    <property type="project" value="InterPro"/>
</dbReference>
<dbReference type="GO" id="GO:0030527">
    <property type="term" value="F:structural constituent of chromatin"/>
    <property type="evidence" value="ECO:0007669"/>
    <property type="project" value="InterPro"/>
</dbReference>
<dbReference type="CDD" id="cd22911">
    <property type="entry name" value="HFD_H3"/>
    <property type="match status" value="1"/>
</dbReference>
<dbReference type="FunFam" id="1.10.20.10:FF:000001">
    <property type="entry name" value="Histone H3"/>
    <property type="match status" value="1"/>
</dbReference>
<dbReference type="Gene3D" id="1.10.20.10">
    <property type="entry name" value="Histone, subunit A"/>
    <property type="match status" value="1"/>
</dbReference>
<dbReference type="InterPro" id="IPR009072">
    <property type="entry name" value="Histone-fold"/>
</dbReference>
<dbReference type="InterPro" id="IPR007125">
    <property type="entry name" value="Histone_H2A/H2B/H3"/>
</dbReference>
<dbReference type="InterPro" id="IPR000164">
    <property type="entry name" value="Histone_H3/CENP-A"/>
</dbReference>
<dbReference type="PANTHER" id="PTHR11426">
    <property type="entry name" value="HISTONE H3"/>
    <property type="match status" value="1"/>
</dbReference>
<dbReference type="Pfam" id="PF00125">
    <property type="entry name" value="Histone"/>
    <property type="match status" value="1"/>
</dbReference>
<dbReference type="PRINTS" id="PR00622">
    <property type="entry name" value="HISTONEH3"/>
</dbReference>
<dbReference type="SMART" id="SM00428">
    <property type="entry name" value="H3"/>
    <property type="match status" value="1"/>
</dbReference>
<dbReference type="SUPFAM" id="SSF47113">
    <property type="entry name" value="Histone-fold"/>
    <property type="match status" value="1"/>
</dbReference>
<dbReference type="PROSITE" id="PS00322">
    <property type="entry name" value="HISTONE_H3_1"/>
    <property type="match status" value="1"/>
</dbReference>
<dbReference type="PROSITE" id="PS00959">
    <property type="entry name" value="HISTONE_H3_2"/>
    <property type="match status" value="1"/>
</dbReference>
<protein>
    <recommendedName>
        <fullName>Histone H3.1</fullName>
    </recommendedName>
</protein>
<name>H31_MYCMD</name>
<sequence length="136" mass="15208">MARTKQTARKSTGGKAPRKQLATKAARKSAPAAGGVKKPHRYKPGTVALREIRRYQKSTELLIRKLPFQRLVREIAQDFKTDLRFQSSAIGALQEAAEAYLVSLFEDTNLAAIHAKRVTIQPKDIALARRLRGERS</sequence>